<reference key="1">
    <citation type="journal article" date="1990" name="Nucleic Acids Res.">
        <title>Nucleotide sequence of the major outer membrane protein gene of Chlamydia trachomatis strain A/SA1/OT.</title>
        <authorList>
            <person name="Hayes L.J."/>
            <person name="Clarke I.N."/>
        </authorList>
    </citation>
    <scope>NUCLEOTIDE SEQUENCE [GENOMIC DNA]</scope>
    <source>
        <strain>SA1/OT / Serovar A</strain>
    </source>
</reference>
<evidence type="ECO:0000250" key="1"/>
<evidence type="ECO:0000305" key="2"/>
<comment type="function">
    <text evidence="1">In elementary bodies (EBs, the infectious stage, which is able to survive outside the host cell) provides the structural integrity of the outer envelope through disulfide cross-links with the small cysteine-rich protein and the large cysteine-rich periplasmic protein. It has been described in publications as the Sarkosyl-insoluble COMC (Chlamydia outer membrane complex), and serves as the functional equivalent of peptidoglycan (By similarity).</text>
</comment>
<comment type="function">
    <text evidence="1">Permits diffusion of specific solutes through the outer membrane.</text>
</comment>
<comment type="subunit">
    <text>Part of a disulfide cross-linked outer membrane complex (COMC) composed of the major outer membrane porin (MOMP), the small cysteine-rich protein (OmcA) and the large cysteine-rich periplasmic protein (OmcB).</text>
</comment>
<comment type="subcellular location">
    <subcellularLocation>
        <location evidence="1">Cell outer membrane</location>
        <topology evidence="1">Multi-pass membrane protein</topology>
    </subcellularLocation>
</comment>
<comment type="developmental stage">
    <text>It is present but some of the disulfide bonds are reduced in reticulate bodies (RBs).</text>
</comment>
<comment type="similarity">
    <text evidence="2">Belongs to the chlamydial porin (CP) (TC 1.B.2) family.</text>
</comment>
<accession>P23732</accession>
<protein>
    <recommendedName>
        <fullName>Major outer membrane porin, serovar A</fullName>
        <shortName>MOMP</shortName>
    </recommendedName>
</protein>
<keyword id="KW-0998">Cell outer membrane</keyword>
<keyword id="KW-0133">Cell shape</keyword>
<keyword id="KW-1015">Disulfide bond</keyword>
<keyword id="KW-0406">Ion transport</keyword>
<keyword id="KW-0472">Membrane</keyword>
<keyword id="KW-0626">Porin</keyword>
<keyword id="KW-0732">Signal</keyword>
<keyword id="KW-0812">Transmembrane</keyword>
<keyword id="KW-1134">Transmembrane beta strand</keyword>
<keyword id="KW-0813">Transport</keyword>
<gene>
    <name type="primary">ompA</name>
    <name type="synonym">omp1A</name>
</gene>
<sequence length="396" mass="42878">MKKLLKSVLVFAALSSASSLQALPVGNPAEPSLMIDGILWEGFGGDPCDPCTTWCDAISMRMGYYGDFVFDRVLKTDVNKEFQMGAAPTTRDVAGLEKDPVVNVARPNPAYGKHMQDAEMFTNAAYMALNIWDRFDVFCTLGATTGYLKGNSASFNLVGLFGTKTQSSGFDTANIVPNTALNQAVVELYTDTTFAWSVGARAALWECGCATLGASFQYAQSKPKVEELNVLCNASEFTINKPKGYVGAEFPLDITAGTEAATGTKDASIDYHEWQASLALSYRLNMFTPYIGVKWSRVSFDADTIRIAQPKLAKPVLDTTTLNPTIAGKGTVVSSAENELADTMQIVSLQLNKMKSRKSCGIAVGTTIVDADKYAVTVETRLIDERAAHVNAQFRF</sequence>
<dbReference type="EMBL" id="M58938">
    <property type="protein sequence ID" value="AAA23141.1"/>
    <property type="molecule type" value="Genomic_DNA"/>
</dbReference>
<dbReference type="EMBL" id="M33635">
    <property type="protein sequence ID" value="AAA92785.1"/>
    <property type="molecule type" value="Genomic_DNA"/>
</dbReference>
<dbReference type="PIR" id="S12799">
    <property type="entry name" value="S12799"/>
</dbReference>
<dbReference type="GO" id="GO:0009279">
    <property type="term" value="C:cell outer membrane"/>
    <property type="evidence" value="ECO:0007669"/>
    <property type="project" value="UniProtKB-SubCell"/>
</dbReference>
<dbReference type="GO" id="GO:0046930">
    <property type="term" value="C:pore complex"/>
    <property type="evidence" value="ECO:0007669"/>
    <property type="project" value="UniProtKB-KW"/>
</dbReference>
<dbReference type="GO" id="GO:0015288">
    <property type="term" value="F:porin activity"/>
    <property type="evidence" value="ECO:0007669"/>
    <property type="project" value="UniProtKB-KW"/>
</dbReference>
<dbReference type="GO" id="GO:0005198">
    <property type="term" value="F:structural molecule activity"/>
    <property type="evidence" value="ECO:0007669"/>
    <property type="project" value="InterPro"/>
</dbReference>
<dbReference type="GO" id="GO:0006811">
    <property type="term" value="P:monoatomic ion transport"/>
    <property type="evidence" value="ECO:0007669"/>
    <property type="project" value="UniProtKB-KW"/>
</dbReference>
<dbReference type="GO" id="GO:0008360">
    <property type="term" value="P:regulation of cell shape"/>
    <property type="evidence" value="ECO:0007669"/>
    <property type="project" value="UniProtKB-KW"/>
</dbReference>
<dbReference type="InterPro" id="IPR000604">
    <property type="entry name" value="Major_OMP_Chlamydia"/>
</dbReference>
<dbReference type="Pfam" id="PF01308">
    <property type="entry name" value="Chlam_OMP"/>
    <property type="match status" value="1"/>
</dbReference>
<dbReference type="PRINTS" id="PR01334">
    <property type="entry name" value="CHLAMIDIAOMP"/>
</dbReference>
<proteinExistence type="evidence at transcript level"/>
<feature type="signal peptide">
    <location>
        <begin position="1"/>
        <end position="22"/>
    </location>
</feature>
<feature type="chain" id="PRO_0000020144" description="Major outer membrane porin, serovar A">
    <location>
        <begin position="23"/>
        <end position="396"/>
    </location>
</feature>
<organism>
    <name type="scientific">Chlamydia trachomatis</name>
    <dbReference type="NCBI Taxonomy" id="813"/>
    <lineage>
        <taxon>Bacteria</taxon>
        <taxon>Pseudomonadati</taxon>
        <taxon>Chlamydiota</taxon>
        <taxon>Chlamydiia</taxon>
        <taxon>Chlamydiales</taxon>
        <taxon>Chlamydiaceae</taxon>
        <taxon>Chlamydia/Chlamydophila group</taxon>
        <taxon>Chlamydia</taxon>
    </lineage>
</organism>
<name>MOMPA_CHLTH</name>